<name>NQOR_METAC</name>
<protein>
    <recommendedName>
        <fullName evidence="1">NAD(P)H dehydrogenase (quinone)</fullName>
        <ecNumber evidence="1">1.6.5.2</ecNumber>
    </recommendedName>
    <alternativeName>
        <fullName>Flavoprotein WrbA</fullName>
    </alternativeName>
    <alternativeName>
        <fullName evidence="1">NAD(P)H:quinone oxidoreductase</fullName>
        <shortName evidence="1">NQO</shortName>
    </alternativeName>
</protein>
<keyword id="KW-0285">Flavoprotein</keyword>
<keyword id="KW-0288">FMN</keyword>
<keyword id="KW-0520">NAD</keyword>
<keyword id="KW-0521">NADP</keyword>
<keyword id="KW-0547">Nucleotide-binding</keyword>
<keyword id="KW-0560">Oxidoreductase</keyword>
<keyword id="KW-1185">Reference proteome</keyword>
<dbReference type="EC" id="1.6.5.2" evidence="1"/>
<dbReference type="EMBL" id="AE010299">
    <property type="protein sequence ID" value="AAM04610.1"/>
    <property type="molecule type" value="Genomic_DNA"/>
</dbReference>
<dbReference type="RefSeq" id="WP_011021213.1">
    <property type="nucleotide sequence ID" value="NC_003552.1"/>
</dbReference>
<dbReference type="SMR" id="P58796"/>
<dbReference type="STRING" id="188937.MA_1189"/>
<dbReference type="EnsemblBacteria" id="AAM04610">
    <property type="protein sequence ID" value="AAM04610"/>
    <property type="gene ID" value="MA_1189"/>
</dbReference>
<dbReference type="GeneID" id="1473077"/>
<dbReference type="KEGG" id="mac:MA_1189"/>
<dbReference type="HOGENOM" id="CLU_051402_0_2_2"/>
<dbReference type="InParanoid" id="P58796"/>
<dbReference type="OrthoDB" id="9059at2157"/>
<dbReference type="PhylomeDB" id="P58796"/>
<dbReference type="Proteomes" id="UP000002487">
    <property type="component" value="Chromosome"/>
</dbReference>
<dbReference type="GO" id="GO:0016020">
    <property type="term" value="C:membrane"/>
    <property type="evidence" value="ECO:0000318"/>
    <property type="project" value="GO_Central"/>
</dbReference>
<dbReference type="GO" id="GO:0050660">
    <property type="term" value="F:flavin adenine dinucleotide binding"/>
    <property type="evidence" value="ECO:0007669"/>
    <property type="project" value="UniProtKB-UniRule"/>
</dbReference>
<dbReference type="GO" id="GO:0010181">
    <property type="term" value="F:FMN binding"/>
    <property type="evidence" value="ECO:0007669"/>
    <property type="project" value="InterPro"/>
</dbReference>
<dbReference type="GO" id="GO:0051287">
    <property type="term" value="F:NAD binding"/>
    <property type="evidence" value="ECO:0007669"/>
    <property type="project" value="UniProtKB-UniRule"/>
</dbReference>
<dbReference type="GO" id="GO:0003955">
    <property type="term" value="F:NAD(P)H dehydrogenase (quinone) activity"/>
    <property type="evidence" value="ECO:0000318"/>
    <property type="project" value="GO_Central"/>
</dbReference>
<dbReference type="GO" id="GO:0050136">
    <property type="term" value="F:NADH:ubiquinone reductase (non-electrogenic) activity"/>
    <property type="evidence" value="ECO:0007669"/>
    <property type="project" value="RHEA"/>
</dbReference>
<dbReference type="GO" id="GO:0050661">
    <property type="term" value="F:NADP binding"/>
    <property type="evidence" value="ECO:0007669"/>
    <property type="project" value="UniProtKB-UniRule"/>
</dbReference>
<dbReference type="GO" id="GO:0008753">
    <property type="term" value="F:NADPH dehydrogenase (quinone) activity"/>
    <property type="evidence" value="ECO:0007669"/>
    <property type="project" value="RHEA"/>
</dbReference>
<dbReference type="FunFam" id="3.40.50.360:FF:000001">
    <property type="entry name" value="NAD(P)H dehydrogenase (Quinone) FQR1-like"/>
    <property type="match status" value="1"/>
</dbReference>
<dbReference type="Gene3D" id="3.40.50.360">
    <property type="match status" value="1"/>
</dbReference>
<dbReference type="HAMAP" id="MF_01017">
    <property type="entry name" value="NQOR"/>
    <property type="match status" value="1"/>
</dbReference>
<dbReference type="InterPro" id="IPR008254">
    <property type="entry name" value="Flavodoxin/NO_synth"/>
</dbReference>
<dbReference type="InterPro" id="IPR029039">
    <property type="entry name" value="Flavoprotein-like_sf"/>
</dbReference>
<dbReference type="InterPro" id="IPR010089">
    <property type="entry name" value="Flavoprotein_WrbA-like"/>
</dbReference>
<dbReference type="InterPro" id="IPR005025">
    <property type="entry name" value="FMN_Rdtase-like_dom"/>
</dbReference>
<dbReference type="InterPro" id="IPR037513">
    <property type="entry name" value="NQO"/>
</dbReference>
<dbReference type="NCBIfam" id="TIGR01755">
    <property type="entry name" value="flav_wrbA"/>
    <property type="match status" value="1"/>
</dbReference>
<dbReference type="NCBIfam" id="NF002999">
    <property type="entry name" value="PRK03767.1"/>
    <property type="match status" value="1"/>
</dbReference>
<dbReference type="PANTHER" id="PTHR30546">
    <property type="entry name" value="FLAVODOXIN-RELATED PROTEIN WRBA-RELATED"/>
    <property type="match status" value="1"/>
</dbReference>
<dbReference type="PANTHER" id="PTHR30546:SF23">
    <property type="entry name" value="FLAVOPROTEIN-LIKE PROTEIN YCP4-RELATED"/>
    <property type="match status" value="1"/>
</dbReference>
<dbReference type="Pfam" id="PF03358">
    <property type="entry name" value="FMN_red"/>
    <property type="match status" value="1"/>
</dbReference>
<dbReference type="SUPFAM" id="SSF52218">
    <property type="entry name" value="Flavoproteins"/>
    <property type="match status" value="1"/>
</dbReference>
<dbReference type="PROSITE" id="PS50902">
    <property type="entry name" value="FLAVODOXIN_LIKE"/>
    <property type="match status" value="1"/>
</dbReference>
<organism>
    <name type="scientific">Methanosarcina acetivorans (strain ATCC 35395 / DSM 2834 / JCM 12185 / C2A)</name>
    <dbReference type="NCBI Taxonomy" id="188937"/>
    <lineage>
        <taxon>Archaea</taxon>
        <taxon>Methanobacteriati</taxon>
        <taxon>Methanobacteriota</taxon>
        <taxon>Stenosarchaea group</taxon>
        <taxon>Methanomicrobia</taxon>
        <taxon>Methanosarcinales</taxon>
        <taxon>Methanosarcinaceae</taxon>
        <taxon>Methanosarcina</taxon>
    </lineage>
</organism>
<reference key="1">
    <citation type="journal article" date="2002" name="Genome Res.">
        <title>The genome of Methanosarcina acetivorans reveals extensive metabolic and physiological diversity.</title>
        <authorList>
            <person name="Galagan J.E."/>
            <person name="Nusbaum C."/>
            <person name="Roy A."/>
            <person name="Endrizzi M.G."/>
            <person name="Macdonald P."/>
            <person name="FitzHugh W."/>
            <person name="Calvo S."/>
            <person name="Engels R."/>
            <person name="Smirnov S."/>
            <person name="Atnoor D."/>
            <person name="Brown A."/>
            <person name="Allen N."/>
            <person name="Naylor J."/>
            <person name="Stange-Thomann N."/>
            <person name="DeArellano K."/>
            <person name="Johnson R."/>
            <person name="Linton L."/>
            <person name="McEwan P."/>
            <person name="McKernan K."/>
            <person name="Talamas J."/>
            <person name="Tirrell A."/>
            <person name="Ye W."/>
            <person name="Zimmer A."/>
            <person name="Barber R.D."/>
            <person name="Cann I."/>
            <person name="Graham D.E."/>
            <person name="Grahame D.A."/>
            <person name="Guss A.M."/>
            <person name="Hedderich R."/>
            <person name="Ingram-Smith C."/>
            <person name="Kuettner H.C."/>
            <person name="Krzycki J.A."/>
            <person name="Leigh J.A."/>
            <person name="Li W."/>
            <person name="Liu J."/>
            <person name="Mukhopadhyay B."/>
            <person name="Reeve J.N."/>
            <person name="Smith K."/>
            <person name="Springer T.A."/>
            <person name="Umayam L.A."/>
            <person name="White O."/>
            <person name="White R.H."/>
            <person name="de Macario E.C."/>
            <person name="Ferry J.G."/>
            <person name="Jarrell K.F."/>
            <person name="Jing H."/>
            <person name="Macario A.J.L."/>
            <person name="Paulsen I.T."/>
            <person name="Pritchett M."/>
            <person name="Sowers K.R."/>
            <person name="Swanson R.V."/>
            <person name="Zinder S.H."/>
            <person name="Lander E."/>
            <person name="Metcalf W.W."/>
            <person name="Birren B."/>
        </authorList>
    </citation>
    <scope>NUCLEOTIDE SEQUENCE [LARGE SCALE GENOMIC DNA]</scope>
    <source>
        <strain>ATCC 35395 / DSM 2834 / JCM 12185 / C2A</strain>
    </source>
</reference>
<evidence type="ECO:0000255" key="1">
    <source>
        <dbReference type="HAMAP-Rule" id="MF_01017"/>
    </source>
</evidence>
<feature type="chain" id="PRO_0000200762" description="NAD(P)H dehydrogenase (quinone)">
    <location>
        <begin position="1"/>
        <end position="209"/>
    </location>
</feature>
<feature type="domain" description="Flavodoxin-like" evidence="1">
    <location>
        <begin position="4"/>
        <end position="199"/>
    </location>
</feature>
<feature type="binding site" evidence="1">
    <location>
        <begin position="10"/>
        <end position="15"/>
    </location>
    <ligand>
        <name>FMN</name>
        <dbReference type="ChEBI" id="CHEBI:58210"/>
    </ligand>
</feature>
<feature type="binding site" evidence="1">
    <location>
        <position position="12"/>
    </location>
    <ligand>
        <name>NAD(+)</name>
        <dbReference type="ChEBI" id="CHEBI:57540"/>
    </ligand>
</feature>
<feature type="binding site" evidence="1">
    <location>
        <begin position="87"/>
        <end position="89"/>
    </location>
    <ligand>
        <name>FMN</name>
        <dbReference type="ChEBI" id="CHEBI:58210"/>
    </ligand>
</feature>
<feature type="binding site" evidence="1">
    <location>
        <position position="107"/>
    </location>
    <ligand>
        <name>substrate</name>
    </ligand>
</feature>
<feature type="binding site" evidence="1">
    <location>
        <begin position="122"/>
        <end position="128"/>
    </location>
    <ligand>
        <name>FMN</name>
        <dbReference type="ChEBI" id="CHEBI:58210"/>
    </ligand>
</feature>
<feature type="binding site" evidence="1">
    <location>
        <position position="143"/>
    </location>
    <ligand>
        <name>FMN</name>
        <dbReference type="ChEBI" id="CHEBI:58210"/>
    </ligand>
</feature>
<accession>P58796</accession>
<sequence length="209" mass="22604">MVKVNIIFYSMYGHVYRMAEAVAAGAREVEGAEVGIYQVPETLPEEVLEKMGAIETKKLFAHIPVLTREMNEEVLAGADALIFGTPTRYGNMTAQMRAVLDGLGGLWNRDAFVGKVGSVFTSSGTQHGGQESTILTFHVTLLHLGMILVGLPYSEKRQTRMDEITGGSPYGVSTIAGGDGSRQPSENELAMARYQGRHVTLIAKKIAGK</sequence>
<gene>
    <name type="ordered locus">MA_1189</name>
</gene>
<comment type="catalytic activity">
    <reaction evidence="1">
        <text>a quinone + NADH + H(+) = a quinol + NAD(+)</text>
        <dbReference type="Rhea" id="RHEA:46160"/>
        <dbReference type="ChEBI" id="CHEBI:15378"/>
        <dbReference type="ChEBI" id="CHEBI:24646"/>
        <dbReference type="ChEBI" id="CHEBI:57540"/>
        <dbReference type="ChEBI" id="CHEBI:57945"/>
        <dbReference type="ChEBI" id="CHEBI:132124"/>
        <dbReference type="EC" id="1.6.5.2"/>
    </reaction>
</comment>
<comment type="catalytic activity">
    <reaction evidence="1">
        <text>a quinone + NADPH + H(+) = a quinol + NADP(+)</text>
        <dbReference type="Rhea" id="RHEA:46164"/>
        <dbReference type="ChEBI" id="CHEBI:15378"/>
        <dbReference type="ChEBI" id="CHEBI:24646"/>
        <dbReference type="ChEBI" id="CHEBI:57783"/>
        <dbReference type="ChEBI" id="CHEBI:58349"/>
        <dbReference type="ChEBI" id="CHEBI:132124"/>
        <dbReference type="EC" id="1.6.5.2"/>
    </reaction>
</comment>
<comment type="cofactor">
    <cofactor evidence="1">
        <name>FMN</name>
        <dbReference type="ChEBI" id="CHEBI:58210"/>
    </cofactor>
    <text evidence="1">Binds 1 FMN per monomer.</text>
</comment>
<comment type="similarity">
    <text evidence="1">Belongs to the WrbA family.</text>
</comment>
<proteinExistence type="inferred from homology"/>